<organism>
    <name type="scientific">Bradyrhizobium diazoefficiens (strain JCM 10833 / BCRC 13528 / IAM 13628 / NBRC 14792 / USDA 110)</name>
    <dbReference type="NCBI Taxonomy" id="224911"/>
    <lineage>
        <taxon>Bacteria</taxon>
        <taxon>Pseudomonadati</taxon>
        <taxon>Pseudomonadota</taxon>
        <taxon>Alphaproteobacteria</taxon>
        <taxon>Hyphomicrobiales</taxon>
        <taxon>Nitrobacteraceae</taxon>
        <taxon>Bradyrhizobium</taxon>
    </lineage>
</organism>
<comment type="function">
    <text evidence="1">IF-3 binds to the 30S ribosomal subunit and shifts the equilibrium between 70S ribosomes and their 50S and 30S subunits in favor of the free subunits, thus enhancing the availability of 30S subunits on which protein synthesis initiation begins.</text>
</comment>
<comment type="subunit">
    <text evidence="1">Monomer.</text>
</comment>
<comment type="subcellular location">
    <subcellularLocation>
        <location evidence="1">Cytoplasm</location>
    </subcellularLocation>
</comment>
<comment type="similarity">
    <text evidence="1">Belongs to the IF-3 family.</text>
</comment>
<keyword id="KW-0963">Cytoplasm</keyword>
<keyword id="KW-0396">Initiation factor</keyword>
<keyword id="KW-0648">Protein biosynthesis</keyword>
<keyword id="KW-1185">Reference proteome</keyword>
<protein>
    <recommendedName>
        <fullName evidence="1">Translation initiation factor IF-3</fullName>
    </recommendedName>
</protein>
<dbReference type="EMBL" id="BA000040">
    <property type="protein sequence ID" value="BAC45975.1"/>
    <property type="molecule type" value="Genomic_DNA"/>
</dbReference>
<dbReference type="RefSeq" id="NP_767350.1">
    <property type="nucleotide sequence ID" value="NC_004463.1"/>
</dbReference>
<dbReference type="RefSeq" id="WP_011083535.1">
    <property type="nucleotide sequence ID" value="NC_004463.1"/>
</dbReference>
<dbReference type="SMR" id="Q89WH7"/>
<dbReference type="FunCoup" id="Q89WH7">
    <property type="interactions" value="645"/>
</dbReference>
<dbReference type="STRING" id="224911.AAV28_00390"/>
<dbReference type="EnsemblBacteria" id="BAC45975">
    <property type="protein sequence ID" value="BAC45975"/>
    <property type="gene ID" value="BAC45975"/>
</dbReference>
<dbReference type="GeneID" id="46487984"/>
<dbReference type="KEGG" id="bja:bll0710"/>
<dbReference type="PATRIC" id="fig|224911.5.peg.732"/>
<dbReference type="eggNOG" id="COG0290">
    <property type="taxonomic scope" value="Bacteria"/>
</dbReference>
<dbReference type="HOGENOM" id="CLU_054919_3_2_5"/>
<dbReference type="InParanoid" id="Q89WH7"/>
<dbReference type="OrthoDB" id="9806014at2"/>
<dbReference type="PhylomeDB" id="Q89WH7"/>
<dbReference type="Proteomes" id="UP000002526">
    <property type="component" value="Chromosome"/>
</dbReference>
<dbReference type="GO" id="GO:0005829">
    <property type="term" value="C:cytosol"/>
    <property type="evidence" value="ECO:0000318"/>
    <property type="project" value="GO_Central"/>
</dbReference>
<dbReference type="GO" id="GO:0043022">
    <property type="term" value="F:ribosome binding"/>
    <property type="evidence" value="ECO:0000318"/>
    <property type="project" value="GO_Central"/>
</dbReference>
<dbReference type="GO" id="GO:0003743">
    <property type="term" value="F:translation initiation factor activity"/>
    <property type="evidence" value="ECO:0000318"/>
    <property type="project" value="GO_Central"/>
</dbReference>
<dbReference type="GO" id="GO:0032790">
    <property type="term" value="P:ribosome disassembly"/>
    <property type="evidence" value="ECO:0000318"/>
    <property type="project" value="GO_Central"/>
</dbReference>
<dbReference type="FunFam" id="3.10.20.80:FF:000008">
    <property type="entry name" value="Translation initiation factor IF-3"/>
    <property type="match status" value="1"/>
</dbReference>
<dbReference type="FunFam" id="3.30.110.10:FF:000001">
    <property type="entry name" value="Translation initiation factor IF-3"/>
    <property type="match status" value="1"/>
</dbReference>
<dbReference type="Gene3D" id="3.30.110.10">
    <property type="entry name" value="Translation initiation factor 3 (IF-3), C-terminal domain"/>
    <property type="match status" value="1"/>
</dbReference>
<dbReference type="Gene3D" id="3.10.20.80">
    <property type="entry name" value="Translation initiation factor 3 (IF-3), N-terminal domain"/>
    <property type="match status" value="1"/>
</dbReference>
<dbReference type="HAMAP" id="MF_00080">
    <property type="entry name" value="IF_3"/>
    <property type="match status" value="1"/>
</dbReference>
<dbReference type="InterPro" id="IPR036788">
    <property type="entry name" value="T_IF-3_C_sf"/>
</dbReference>
<dbReference type="InterPro" id="IPR036787">
    <property type="entry name" value="T_IF-3_N_sf"/>
</dbReference>
<dbReference type="InterPro" id="IPR001288">
    <property type="entry name" value="Translation_initiation_fac_3"/>
</dbReference>
<dbReference type="InterPro" id="IPR019815">
    <property type="entry name" value="Translation_initiation_fac_3_C"/>
</dbReference>
<dbReference type="InterPro" id="IPR019814">
    <property type="entry name" value="Translation_initiation_fac_3_N"/>
</dbReference>
<dbReference type="NCBIfam" id="TIGR00168">
    <property type="entry name" value="infC"/>
    <property type="match status" value="1"/>
</dbReference>
<dbReference type="PANTHER" id="PTHR10938">
    <property type="entry name" value="TRANSLATION INITIATION FACTOR IF-3"/>
    <property type="match status" value="1"/>
</dbReference>
<dbReference type="PANTHER" id="PTHR10938:SF0">
    <property type="entry name" value="TRANSLATION INITIATION FACTOR IF-3, MITOCHONDRIAL"/>
    <property type="match status" value="1"/>
</dbReference>
<dbReference type="Pfam" id="PF00707">
    <property type="entry name" value="IF3_C"/>
    <property type="match status" value="1"/>
</dbReference>
<dbReference type="Pfam" id="PF05198">
    <property type="entry name" value="IF3_N"/>
    <property type="match status" value="1"/>
</dbReference>
<dbReference type="SUPFAM" id="SSF55200">
    <property type="entry name" value="Translation initiation factor IF3, C-terminal domain"/>
    <property type="match status" value="1"/>
</dbReference>
<dbReference type="SUPFAM" id="SSF54364">
    <property type="entry name" value="Translation initiation factor IF3, N-terminal domain"/>
    <property type="match status" value="1"/>
</dbReference>
<name>IF3_BRADU</name>
<accession>Q89WH7</accession>
<gene>
    <name evidence="1" type="primary">infC</name>
    <name type="ordered locus">bll0710</name>
</gene>
<sequence length="179" mass="20415">MRRPNKAPPAASKDGPRINDDIRNAQIQLIDQTGDNKGTVETVVAIKMAQEAGMDLVEISPNTSPPVCKIMDYGKYKYSAQKKAAEARKRQKTVEIKEIKLRPMIDDHDYDVKMRAMQRFFEEGDKVKITLRYRGREMAHQEIGTKLLDKIKTDVAELAKVEQDARFEGRQVVMVLAPR</sequence>
<evidence type="ECO:0000255" key="1">
    <source>
        <dbReference type="HAMAP-Rule" id="MF_00080"/>
    </source>
</evidence>
<reference key="1">
    <citation type="journal article" date="2002" name="DNA Res.">
        <title>Complete genomic sequence of nitrogen-fixing symbiotic bacterium Bradyrhizobium japonicum USDA110.</title>
        <authorList>
            <person name="Kaneko T."/>
            <person name="Nakamura Y."/>
            <person name="Sato S."/>
            <person name="Minamisawa K."/>
            <person name="Uchiumi T."/>
            <person name="Sasamoto S."/>
            <person name="Watanabe A."/>
            <person name="Idesawa K."/>
            <person name="Iriguchi M."/>
            <person name="Kawashima K."/>
            <person name="Kohara M."/>
            <person name="Matsumoto M."/>
            <person name="Shimpo S."/>
            <person name="Tsuruoka H."/>
            <person name="Wada T."/>
            <person name="Yamada M."/>
            <person name="Tabata S."/>
        </authorList>
    </citation>
    <scope>NUCLEOTIDE SEQUENCE [LARGE SCALE GENOMIC DNA]</scope>
    <source>
        <strain>JCM 10833 / BCRC 13528 / IAM 13628 / NBRC 14792 / USDA 110</strain>
    </source>
</reference>
<proteinExistence type="inferred from homology"/>
<feature type="chain" id="PRO_0000177491" description="Translation initiation factor IF-3">
    <location>
        <begin position="1"/>
        <end position="179"/>
    </location>
</feature>